<feature type="chain" id="PRO_0000365393" description="Eukaryotic translation initiation factor 3 subunit C">
    <location>
        <begin position="1"/>
        <end position="913"/>
    </location>
</feature>
<feature type="domain" description="PCI" evidence="2">
    <location>
        <begin position="645"/>
        <end position="821"/>
    </location>
</feature>
<feature type="region of interest" description="Disordered" evidence="3">
    <location>
        <begin position="1"/>
        <end position="31"/>
    </location>
</feature>
<feature type="region of interest" description="Disordered" evidence="3">
    <location>
        <begin position="157"/>
        <end position="195"/>
    </location>
</feature>
<feature type="region of interest" description="Disordered" evidence="3">
    <location>
        <begin position="208"/>
        <end position="285"/>
    </location>
</feature>
<feature type="region of interest" description="Disordered" evidence="3">
    <location>
        <begin position="856"/>
        <end position="913"/>
    </location>
</feature>
<feature type="compositionally biased region" description="Acidic residues" evidence="3">
    <location>
        <begin position="11"/>
        <end position="20"/>
    </location>
</feature>
<feature type="compositionally biased region" description="Polar residues" evidence="3">
    <location>
        <begin position="21"/>
        <end position="31"/>
    </location>
</feature>
<feature type="compositionally biased region" description="Acidic residues" evidence="3">
    <location>
        <begin position="162"/>
        <end position="171"/>
    </location>
</feature>
<feature type="compositionally biased region" description="Basic and acidic residues" evidence="3">
    <location>
        <begin position="172"/>
        <end position="184"/>
    </location>
</feature>
<feature type="compositionally biased region" description="Acidic residues" evidence="3">
    <location>
        <begin position="214"/>
        <end position="239"/>
    </location>
</feature>
<feature type="compositionally biased region" description="Basic and acidic residues" evidence="3">
    <location>
        <begin position="244"/>
        <end position="263"/>
    </location>
</feature>
<feature type="compositionally biased region" description="Basic residues" evidence="3">
    <location>
        <begin position="264"/>
        <end position="276"/>
    </location>
</feature>
<feature type="compositionally biased region" description="Basic residues" evidence="3">
    <location>
        <begin position="887"/>
        <end position="898"/>
    </location>
</feature>
<feature type="modified residue" description="Phosphoserine" evidence="1">
    <location>
        <position position="34"/>
    </location>
</feature>
<feature type="modified residue" description="Phosphoserine" evidence="1">
    <location>
        <position position="165"/>
    </location>
</feature>
<feature type="modified residue" description="Phosphoserine" evidence="1">
    <location>
        <position position="177"/>
    </location>
</feature>
<feature type="modified residue" description="Phosphoserine" evidence="1">
    <location>
        <position position="186"/>
    </location>
</feature>
<comment type="function">
    <text evidence="1">Component of the eukaryotic translation initiation factor 3 (eIF-3) complex, which is involved in protein synthesis of a specialized repertoire of mRNAs and, together with other initiation factors, stimulates binding of mRNA and methionyl-tRNAi to the 40S ribosome. The eIF-3 complex specifically targets and initiates translation of a subset of mRNAs involved in cell proliferation.</text>
</comment>
<comment type="subunit">
    <text evidence="1">Component of the eukaryotic translation initiation factor 3 (eIF-3) complex. The eIF-3 complex interacts with pix.</text>
</comment>
<comment type="subcellular location">
    <subcellularLocation>
        <location evidence="1">Cytoplasm</location>
    </subcellularLocation>
</comment>
<comment type="similarity">
    <text evidence="1">Belongs to the eIF-3 subunit C family.</text>
</comment>
<evidence type="ECO:0000255" key="1">
    <source>
        <dbReference type="HAMAP-Rule" id="MF_03002"/>
    </source>
</evidence>
<evidence type="ECO:0000255" key="2">
    <source>
        <dbReference type="PROSITE-ProRule" id="PRU01185"/>
    </source>
</evidence>
<evidence type="ECO:0000256" key="3">
    <source>
        <dbReference type="SAM" id="MobiDB-lite"/>
    </source>
</evidence>
<reference key="1">
    <citation type="journal article" date="2007" name="Nature">
        <title>Evolution of genes and genomes on the Drosophila phylogeny.</title>
        <authorList>
            <consortium name="Drosophila 12 genomes consortium"/>
        </authorList>
    </citation>
    <scope>NUCLEOTIDE SEQUENCE [LARGE SCALE GENOMIC DNA]</scope>
    <source>
        <strain>Tucson 15010-1051.87</strain>
    </source>
</reference>
<organism>
    <name type="scientific">Drosophila virilis</name>
    <name type="common">Fruit fly</name>
    <dbReference type="NCBI Taxonomy" id="7244"/>
    <lineage>
        <taxon>Eukaryota</taxon>
        <taxon>Metazoa</taxon>
        <taxon>Ecdysozoa</taxon>
        <taxon>Arthropoda</taxon>
        <taxon>Hexapoda</taxon>
        <taxon>Insecta</taxon>
        <taxon>Pterygota</taxon>
        <taxon>Neoptera</taxon>
        <taxon>Endopterygota</taxon>
        <taxon>Diptera</taxon>
        <taxon>Brachycera</taxon>
        <taxon>Muscomorpha</taxon>
        <taxon>Ephydroidea</taxon>
        <taxon>Drosophilidae</taxon>
        <taxon>Drosophila</taxon>
    </lineage>
</organism>
<proteinExistence type="inferred from homology"/>
<sequence length="913" mass="106058">MSRFFANGSDSESESSEEEVQASNFNKANNFQFSDDEEEVKRVVRSTKEKRYENLTGIIKTIRNHKKIKDIPNTLSSFEDLTRAYTKALPVISKEENGITPRFYIRCLAELEDFINEVWEDREGRKNLSKNNSKSLGTLRQKVRKYIKDFEEDLARFREAPDQESDVDEGEGEAHDSDAERAGADSDGGIGAGTGKLAELPKAAKLVPTKVAADEDDSDDSIDWDSDTESETESSEDENLYQNMRERFLKRTTEKEDKDDDKRKDKRKEQKHKVRKRADDDEDGEWETVVKGNVVEKPKMFEKDAEIDIPLVLAKLVEIMSARGKKRTDRRLQIDLLFELRDISEQHELGTPISVKIHFNIISAIFDYNQKISEPMKLEHWALLLEVMQSMLKLLLANPEINMNESVAEEHEEYGAAPYFIRGCPLAAVERLDDEFTKLLKECDPHSNDYVSRLKDEINVVKTIELVVQYFERCGSNNERCRIYLRKIEHLYYKFDPEVLKRKRGELPAAGTAPSSVEVMDKLCKFIYAKDDTDRIRTRAILAHIYHHAMHDNWFQARDLVLMSHLQDNIDAADPSTRILYNRMMANLGLCAFRQENIKDAHHCLVDLMVTGKPKELLAQGLLPQRQHERSAEQEKIEKQRQMPFHMHINLELLECVYLVSAMLLEIPYIAAHEFDARRRMISKTFYQQLRSSERQSLVGPPESMREHVVAAAKAMRCGNWQACANFIVNKKMNTKVWDLFYESERVREMLVKFIKEESLRTYLFTYSNVYTSISIPSLAQMYELPLPKVHSIISKMIINEELMASLDDPSETVVMHRSEPSRLQALAMQFVDKVTNLVDVNEKVFDMKQGNFFQRGNMGNRDRGYNRNQNNQGGNWGGQRRDNRNQRNRNQRGHHKQQQQQQQQQVQTIEEE</sequence>
<gene>
    <name evidence="1" type="primary">eIF3c</name>
    <name evidence="1" type="synonym">eIF3-S8</name>
    <name type="ORF">GJ21821</name>
</gene>
<dbReference type="EMBL" id="CH940648">
    <property type="protein sequence ID" value="EDW61053.1"/>
    <property type="molecule type" value="Genomic_DNA"/>
</dbReference>
<dbReference type="RefSeq" id="XP_002049860.1">
    <property type="nucleotide sequence ID" value="XM_002049824.4"/>
</dbReference>
<dbReference type="SMR" id="B4LNA1"/>
<dbReference type="FunCoup" id="B4LNA1">
    <property type="interactions" value="1961"/>
</dbReference>
<dbReference type="STRING" id="7244.B4LNA1"/>
<dbReference type="EnsemblMetazoa" id="FBtr0237746">
    <property type="protein sequence ID" value="FBpp0236238"/>
    <property type="gene ID" value="FBgn0208939"/>
</dbReference>
<dbReference type="EnsemblMetazoa" id="XM_002049824.3">
    <property type="protein sequence ID" value="XP_002049860.1"/>
    <property type="gene ID" value="LOC6625912"/>
</dbReference>
<dbReference type="GeneID" id="6625912"/>
<dbReference type="KEGG" id="dvi:6625912"/>
<dbReference type="CTD" id="8663"/>
<dbReference type="eggNOG" id="KOG1076">
    <property type="taxonomic scope" value="Eukaryota"/>
</dbReference>
<dbReference type="HOGENOM" id="CLU_004304_0_0_1"/>
<dbReference type="InParanoid" id="B4LNA1"/>
<dbReference type="OMA" id="FRCGLIK"/>
<dbReference type="OrthoDB" id="29647at2759"/>
<dbReference type="PhylomeDB" id="B4LNA1"/>
<dbReference type="ChiTaRS" id="eIF3-S8">
    <property type="organism name" value="fly"/>
</dbReference>
<dbReference type="Proteomes" id="UP000008792">
    <property type="component" value="Unassembled WGS sequence"/>
</dbReference>
<dbReference type="GO" id="GO:0016282">
    <property type="term" value="C:eukaryotic 43S preinitiation complex"/>
    <property type="evidence" value="ECO:0007669"/>
    <property type="project" value="UniProtKB-UniRule"/>
</dbReference>
<dbReference type="GO" id="GO:0033290">
    <property type="term" value="C:eukaryotic 48S preinitiation complex"/>
    <property type="evidence" value="ECO:0007669"/>
    <property type="project" value="UniProtKB-UniRule"/>
</dbReference>
<dbReference type="GO" id="GO:0005852">
    <property type="term" value="C:eukaryotic translation initiation factor 3 complex"/>
    <property type="evidence" value="ECO:0007669"/>
    <property type="project" value="UniProtKB-UniRule"/>
</dbReference>
<dbReference type="GO" id="GO:0003723">
    <property type="term" value="F:RNA binding"/>
    <property type="evidence" value="ECO:0007669"/>
    <property type="project" value="InterPro"/>
</dbReference>
<dbReference type="GO" id="GO:0003743">
    <property type="term" value="F:translation initiation factor activity"/>
    <property type="evidence" value="ECO:0007669"/>
    <property type="project" value="UniProtKB-UniRule"/>
</dbReference>
<dbReference type="GO" id="GO:0031369">
    <property type="term" value="F:translation initiation factor binding"/>
    <property type="evidence" value="ECO:0007669"/>
    <property type="project" value="InterPro"/>
</dbReference>
<dbReference type="GO" id="GO:0001732">
    <property type="term" value="P:formation of cytoplasmic translation initiation complex"/>
    <property type="evidence" value="ECO:0007669"/>
    <property type="project" value="UniProtKB-UniRule"/>
</dbReference>
<dbReference type="Gene3D" id="1.25.40.570">
    <property type="match status" value="1"/>
</dbReference>
<dbReference type="HAMAP" id="MF_03002">
    <property type="entry name" value="eIF3c"/>
    <property type="match status" value="1"/>
</dbReference>
<dbReference type="InterPro" id="IPR027516">
    <property type="entry name" value="EIF3C"/>
</dbReference>
<dbReference type="InterPro" id="IPR008905">
    <property type="entry name" value="EIF3C_N_dom"/>
</dbReference>
<dbReference type="InterPro" id="IPR000717">
    <property type="entry name" value="PCI_dom"/>
</dbReference>
<dbReference type="InterPro" id="IPR036390">
    <property type="entry name" value="WH_DNA-bd_sf"/>
</dbReference>
<dbReference type="PANTHER" id="PTHR13937">
    <property type="entry name" value="EUKARYOTIC TRANSLATION INITATION FACTOR 3, SUBUNIT 8 EIF3S8 -RELATED"/>
    <property type="match status" value="1"/>
</dbReference>
<dbReference type="PANTHER" id="PTHR13937:SF0">
    <property type="entry name" value="EUKARYOTIC TRANSLATION INITIATION FACTOR 3 SUBUNIT C-RELATED"/>
    <property type="match status" value="1"/>
</dbReference>
<dbReference type="Pfam" id="PF05470">
    <property type="entry name" value="eIF-3c_N"/>
    <property type="match status" value="1"/>
</dbReference>
<dbReference type="Pfam" id="PF01399">
    <property type="entry name" value="PCI"/>
    <property type="match status" value="1"/>
</dbReference>
<dbReference type="SMART" id="SM00088">
    <property type="entry name" value="PINT"/>
    <property type="match status" value="1"/>
</dbReference>
<dbReference type="SUPFAM" id="SSF46785">
    <property type="entry name" value="Winged helix' DNA-binding domain"/>
    <property type="match status" value="1"/>
</dbReference>
<dbReference type="PROSITE" id="PS50250">
    <property type="entry name" value="PCI"/>
    <property type="match status" value="1"/>
</dbReference>
<name>EIF3C_DROVI</name>
<keyword id="KW-0963">Cytoplasm</keyword>
<keyword id="KW-0396">Initiation factor</keyword>
<keyword id="KW-0597">Phosphoprotein</keyword>
<keyword id="KW-0648">Protein biosynthesis</keyword>
<keyword id="KW-1185">Reference proteome</keyword>
<protein>
    <recommendedName>
        <fullName evidence="1">Eukaryotic translation initiation factor 3 subunit C</fullName>
        <shortName evidence="1">eIF3c</shortName>
    </recommendedName>
    <alternativeName>
        <fullName evidence="1">Eukaryotic translation initiation factor 3 subunit 8</fullName>
    </alternativeName>
</protein>
<accession>B4LNA1</accession>